<organismHost>
    <name type="scientific">Ornithodoros</name>
    <name type="common">relapsing fever ticks</name>
    <dbReference type="NCBI Taxonomy" id="6937"/>
</organismHost>
<organismHost>
    <name type="scientific">Phacochoerus aethiopicus</name>
    <name type="common">Warthog</name>
    <dbReference type="NCBI Taxonomy" id="85517"/>
</organismHost>
<organismHost>
    <name type="scientific">Phacochoerus africanus</name>
    <name type="common">Warthog</name>
    <dbReference type="NCBI Taxonomy" id="41426"/>
</organismHost>
<organismHost>
    <name type="scientific">Potamochoerus larvatus</name>
    <name type="common">Bushpig</name>
    <dbReference type="NCBI Taxonomy" id="273792"/>
</organismHost>
<organismHost>
    <name type="scientific">Sus scrofa</name>
    <name type="common">Pig</name>
    <dbReference type="NCBI Taxonomy" id="9823"/>
</organismHost>
<protein>
    <recommendedName>
        <fullName>Protein MGF 360-12L</fullName>
    </recommendedName>
</protein>
<comment type="function">
    <text evidence="1">Plays a role in virus cell tropism, and may be required for efficient virus replication in macrophages.</text>
</comment>
<comment type="similarity">
    <text evidence="2">Belongs to the asfivirus MGF 360 family.</text>
</comment>
<proteinExistence type="inferred from homology"/>
<evidence type="ECO:0000250" key="1"/>
<evidence type="ECO:0000305" key="2"/>
<gene>
    <name type="ordered locus">Pret-035</name>
</gene>
<organism>
    <name type="scientific">African swine fever virus (isolate Tick/South Africa/Pretoriuskop Pr4/1996)</name>
    <name type="common">ASFV</name>
    <dbReference type="NCBI Taxonomy" id="561443"/>
    <lineage>
        <taxon>Viruses</taxon>
        <taxon>Varidnaviria</taxon>
        <taxon>Bamfordvirae</taxon>
        <taxon>Nucleocytoviricota</taxon>
        <taxon>Pokkesviricetes</taxon>
        <taxon>Asfuvirales</taxon>
        <taxon>Asfarviridae</taxon>
        <taxon>Asfivirus</taxon>
        <taxon>African swine fever virus</taxon>
    </lineage>
</organism>
<sequence>MLPSLQSLTKKVLAGQCVPTNQHYLLKCYDLWWHDGPITFDHNLKLIKSAGIKEGLDLNTALVKAVRENNYNLIKLFAEWGANINYGLVSVNTEHTWDLCRELGAKETLNEEEILQIFIDLKFHKTSSNIILCHEVFSNNPILQKVNNIKMRIEIFWELRELIEKTDLLNNEFSLSTLLLKYWYAIAIRYNLKEAIQYFYQKYTHLNTWRLTCALCFNNVFDLHEAYEKDKIHMDIEEMMRIACIKDHNLSTMYYCYVLGGNINQAMLTSIQYYNIENMFFCMDLGADAFEEGTIALGEGYKLIKNILSLKIYSPATTPLPKSTDPEIIDHALKNYVSKNMMIFLTYDLR</sequence>
<accession>P0C9Q1</accession>
<feature type="chain" id="PRO_0000373282" description="Protein MGF 360-12L">
    <location>
        <begin position="1"/>
        <end position="350"/>
    </location>
</feature>
<feature type="repeat" description="ANK">
    <location>
        <begin position="57"/>
        <end position="89"/>
    </location>
</feature>
<dbReference type="EMBL" id="AY261363">
    <property type="status" value="NOT_ANNOTATED_CDS"/>
    <property type="molecule type" value="Genomic_DNA"/>
</dbReference>
<dbReference type="SMR" id="P0C9Q1"/>
<dbReference type="Proteomes" id="UP000000859">
    <property type="component" value="Segment"/>
</dbReference>
<dbReference type="GO" id="GO:0042330">
    <property type="term" value="P:taxis"/>
    <property type="evidence" value="ECO:0007669"/>
    <property type="project" value="InterPro"/>
</dbReference>
<dbReference type="InterPro" id="IPR002595">
    <property type="entry name" value="ASFV_MGF360"/>
</dbReference>
<dbReference type="Pfam" id="PF01671">
    <property type="entry name" value="ASFV_360"/>
    <property type="match status" value="1"/>
</dbReference>
<name>36012_ASFP4</name>
<reference key="1">
    <citation type="submission" date="2003-03" db="EMBL/GenBank/DDBJ databases">
        <title>African swine fever virus genomes.</title>
        <authorList>
            <person name="Kutish G.F."/>
            <person name="Rock D.L."/>
        </authorList>
    </citation>
    <scope>NUCLEOTIDE SEQUENCE [LARGE SCALE GENOMIC DNA]</scope>
</reference>
<keyword id="KW-0040">ANK repeat</keyword>